<name>TPIS_METCA</name>
<keyword id="KW-0963">Cytoplasm</keyword>
<keyword id="KW-0312">Gluconeogenesis</keyword>
<keyword id="KW-0324">Glycolysis</keyword>
<keyword id="KW-0413">Isomerase</keyword>
<keyword id="KW-1185">Reference proteome</keyword>
<protein>
    <recommendedName>
        <fullName evidence="1">Triosephosphate isomerase</fullName>
        <shortName evidence="1">TIM</shortName>
        <shortName evidence="1">TPI</shortName>
        <ecNumber evidence="1">5.3.1.1</ecNumber>
    </recommendedName>
    <alternativeName>
        <fullName evidence="1">Triose-phosphate isomerase</fullName>
    </alternativeName>
</protein>
<dbReference type="EC" id="5.3.1.1" evidence="1"/>
<dbReference type="EMBL" id="AE017282">
    <property type="protein sequence ID" value="AAU93201.1"/>
    <property type="molecule type" value="Genomic_DNA"/>
</dbReference>
<dbReference type="RefSeq" id="WP_010960015.1">
    <property type="nucleotide sequence ID" value="NC_002977.6"/>
</dbReference>
<dbReference type="SMR" id="Q60B10"/>
<dbReference type="STRING" id="243233.MCA0674"/>
<dbReference type="GeneID" id="88222997"/>
<dbReference type="KEGG" id="mca:MCA0674"/>
<dbReference type="eggNOG" id="COG0149">
    <property type="taxonomic scope" value="Bacteria"/>
</dbReference>
<dbReference type="HOGENOM" id="CLU_024251_2_1_6"/>
<dbReference type="UniPathway" id="UPA00109">
    <property type="reaction ID" value="UER00189"/>
</dbReference>
<dbReference type="UniPathway" id="UPA00138"/>
<dbReference type="Proteomes" id="UP000006821">
    <property type="component" value="Chromosome"/>
</dbReference>
<dbReference type="GO" id="GO:0005829">
    <property type="term" value="C:cytosol"/>
    <property type="evidence" value="ECO:0007669"/>
    <property type="project" value="TreeGrafter"/>
</dbReference>
<dbReference type="GO" id="GO:0004807">
    <property type="term" value="F:triose-phosphate isomerase activity"/>
    <property type="evidence" value="ECO:0007669"/>
    <property type="project" value="UniProtKB-UniRule"/>
</dbReference>
<dbReference type="GO" id="GO:0006094">
    <property type="term" value="P:gluconeogenesis"/>
    <property type="evidence" value="ECO:0007669"/>
    <property type="project" value="UniProtKB-UniRule"/>
</dbReference>
<dbReference type="GO" id="GO:0046166">
    <property type="term" value="P:glyceraldehyde-3-phosphate biosynthetic process"/>
    <property type="evidence" value="ECO:0007669"/>
    <property type="project" value="TreeGrafter"/>
</dbReference>
<dbReference type="GO" id="GO:0019563">
    <property type="term" value="P:glycerol catabolic process"/>
    <property type="evidence" value="ECO:0007669"/>
    <property type="project" value="TreeGrafter"/>
</dbReference>
<dbReference type="GO" id="GO:0006096">
    <property type="term" value="P:glycolytic process"/>
    <property type="evidence" value="ECO:0007669"/>
    <property type="project" value="UniProtKB-UniRule"/>
</dbReference>
<dbReference type="CDD" id="cd00311">
    <property type="entry name" value="TIM"/>
    <property type="match status" value="1"/>
</dbReference>
<dbReference type="FunFam" id="3.20.20.70:FF:000016">
    <property type="entry name" value="Triosephosphate isomerase"/>
    <property type="match status" value="1"/>
</dbReference>
<dbReference type="Gene3D" id="3.20.20.70">
    <property type="entry name" value="Aldolase class I"/>
    <property type="match status" value="1"/>
</dbReference>
<dbReference type="HAMAP" id="MF_00147_B">
    <property type="entry name" value="TIM_B"/>
    <property type="match status" value="1"/>
</dbReference>
<dbReference type="InterPro" id="IPR013785">
    <property type="entry name" value="Aldolase_TIM"/>
</dbReference>
<dbReference type="InterPro" id="IPR035990">
    <property type="entry name" value="TIM_sf"/>
</dbReference>
<dbReference type="InterPro" id="IPR022896">
    <property type="entry name" value="TrioseP_Isoase_bac/euk"/>
</dbReference>
<dbReference type="InterPro" id="IPR000652">
    <property type="entry name" value="Triosephosphate_isomerase"/>
</dbReference>
<dbReference type="InterPro" id="IPR020861">
    <property type="entry name" value="Triosephosphate_isomerase_AS"/>
</dbReference>
<dbReference type="NCBIfam" id="TIGR00419">
    <property type="entry name" value="tim"/>
    <property type="match status" value="1"/>
</dbReference>
<dbReference type="PANTHER" id="PTHR21139">
    <property type="entry name" value="TRIOSEPHOSPHATE ISOMERASE"/>
    <property type="match status" value="1"/>
</dbReference>
<dbReference type="PANTHER" id="PTHR21139:SF42">
    <property type="entry name" value="TRIOSEPHOSPHATE ISOMERASE"/>
    <property type="match status" value="1"/>
</dbReference>
<dbReference type="Pfam" id="PF00121">
    <property type="entry name" value="TIM"/>
    <property type="match status" value="1"/>
</dbReference>
<dbReference type="SUPFAM" id="SSF51351">
    <property type="entry name" value="Triosephosphate isomerase (TIM)"/>
    <property type="match status" value="1"/>
</dbReference>
<dbReference type="PROSITE" id="PS00171">
    <property type="entry name" value="TIM_1"/>
    <property type="match status" value="1"/>
</dbReference>
<dbReference type="PROSITE" id="PS51440">
    <property type="entry name" value="TIM_2"/>
    <property type="match status" value="1"/>
</dbReference>
<sequence>MRRPLVVGNWKMNGRSASVARLLNDILAGIGDCKAEVGVCVPFVYIPQASEILKGTKVMLGAQNVADHNSGAFTGEISAGMLREFGCELAIVGHSERRLLYGESNELVASRYEQAIQGHLKPILCVGETLEQREQGRTLAVIGAQIDTVFEFAGVQSLEHAVIAYEPVWAVGTGRSATTGQAQEVHYHIRSLIARWNPEVAQAVQIIYGGSVKPENSAELFAMPDIDGGLIGGASLDARAFLSICHSVSV</sequence>
<organism>
    <name type="scientific">Methylococcus capsulatus (strain ATCC 33009 / NCIMB 11132 / Bath)</name>
    <dbReference type="NCBI Taxonomy" id="243233"/>
    <lineage>
        <taxon>Bacteria</taxon>
        <taxon>Pseudomonadati</taxon>
        <taxon>Pseudomonadota</taxon>
        <taxon>Gammaproteobacteria</taxon>
        <taxon>Methylococcales</taxon>
        <taxon>Methylococcaceae</taxon>
        <taxon>Methylococcus</taxon>
    </lineage>
</organism>
<evidence type="ECO:0000255" key="1">
    <source>
        <dbReference type="HAMAP-Rule" id="MF_00147"/>
    </source>
</evidence>
<reference key="1">
    <citation type="journal article" date="2004" name="PLoS Biol.">
        <title>Genomic insights into methanotrophy: the complete genome sequence of Methylococcus capsulatus (Bath).</title>
        <authorList>
            <person name="Ward N.L."/>
            <person name="Larsen O."/>
            <person name="Sakwa J."/>
            <person name="Bruseth L."/>
            <person name="Khouri H.M."/>
            <person name="Durkin A.S."/>
            <person name="Dimitrov G."/>
            <person name="Jiang L."/>
            <person name="Scanlan D."/>
            <person name="Kang K.H."/>
            <person name="Lewis M.R."/>
            <person name="Nelson K.E."/>
            <person name="Methe B.A."/>
            <person name="Wu M."/>
            <person name="Heidelberg J.F."/>
            <person name="Paulsen I.T."/>
            <person name="Fouts D.E."/>
            <person name="Ravel J."/>
            <person name="Tettelin H."/>
            <person name="Ren Q."/>
            <person name="Read T.D."/>
            <person name="DeBoy R.T."/>
            <person name="Seshadri R."/>
            <person name="Salzberg S.L."/>
            <person name="Jensen H.B."/>
            <person name="Birkeland N.K."/>
            <person name="Nelson W.C."/>
            <person name="Dodson R.J."/>
            <person name="Grindhaug S.H."/>
            <person name="Holt I.E."/>
            <person name="Eidhammer I."/>
            <person name="Jonasen I."/>
            <person name="Vanaken S."/>
            <person name="Utterback T.R."/>
            <person name="Feldblyum T.V."/>
            <person name="Fraser C.M."/>
            <person name="Lillehaug J.R."/>
            <person name="Eisen J.A."/>
        </authorList>
    </citation>
    <scope>NUCLEOTIDE SEQUENCE [LARGE SCALE GENOMIC DNA]</scope>
    <source>
        <strain>ATCC 33009 / NCIMB 11132 / Bath</strain>
    </source>
</reference>
<gene>
    <name evidence="1" type="primary">tpiA</name>
    <name type="ordered locus">MCA0674</name>
</gene>
<proteinExistence type="inferred from homology"/>
<feature type="chain" id="PRO_0000307500" description="Triosephosphate isomerase">
    <location>
        <begin position="1"/>
        <end position="250"/>
    </location>
</feature>
<feature type="active site" description="Electrophile" evidence="1">
    <location>
        <position position="94"/>
    </location>
</feature>
<feature type="active site" description="Proton acceptor" evidence="1">
    <location>
        <position position="166"/>
    </location>
</feature>
<feature type="binding site" evidence="1">
    <location>
        <begin position="9"/>
        <end position="11"/>
    </location>
    <ligand>
        <name>substrate</name>
    </ligand>
</feature>
<feature type="binding site" evidence="1">
    <location>
        <position position="172"/>
    </location>
    <ligand>
        <name>substrate</name>
    </ligand>
</feature>
<feature type="binding site" evidence="1">
    <location>
        <position position="211"/>
    </location>
    <ligand>
        <name>substrate</name>
    </ligand>
</feature>
<feature type="binding site" evidence="1">
    <location>
        <begin position="232"/>
        <end position="233"/>
    </location>
    <ligand>
        <name>substrate</name>
    </ligand>
</feature>
<accession>Q60B10</accession>
<comment type="function">
    <text evidence="1">Involved in the gluconeogenesis. Catalyzes stereospecifically the conversion of dihydroxyacetone phosphate (DHAP) to D-glyceraldehyde-3-phosphate (G3P).</text>
</comment>
<comment type="catalytic activity">
    <reaction evidence="1">
        <text>D-glyceraldehyde 3-phosphate = dihydroxyacetone phosphate</text>
        <dbReference type="Rhea" id="RHEA:18585"/>
        <dbReference type="ChEBI" id="CHEBI:57642"/>
        <dbReference type="ChEBI" id="CHEBI:59776"/>
        <dbReference type="EC" id="5.3.1.1"/>
    </reaction>
</comment>
<comment type="pathway">
    <text evidence="1">Carbohydrate biosynthesis; gluconeogenesis.</text>
</comment>
<comment type="pathway">
    <text evidence="1">Carbohydrate degradation; glycolysis; D-glyceraldehyde 3-phosphate from glycerone phosphate: step 1/1.</text>
</comment>
<comment type="subunit">
    <text evidence="1">Homodimer.</text>
</comment>
<comment type="subcellular location">
    <subcellularLocation>
        <location evidence="1">Cytoplasm</location>
    </subcellularLocation>
</comment>
<comment type="similarity">
    <text evidence="1">Belongs to the triosephosphate isomerase family.</text>
</comment>